<feature type="signal peptide" evidence="1">
    <location>
        <begin position="1"/>
        <end position="22"/>
    </location>
</feature>
<feature type="chain" id="PRO_0000328324" description="Cystinosin">
    <location>
        <begin position="23"/>
        <end position="367"/>
    </location>
</feature>
<feature type="topological domain" description="Lumenal" evidence="1">
    <location>
        <begin position="23"/>
        <end position="125"/>
    </location>
</feature>
<feature type="transmembrane region" description="Helical" evidence="1">
    <location>
        <begin position="126"/>
        <end position="150"/>
    </location>
</feature>
<feature type="topological domain" description="Cytoplasmic" evidence="1">
    <location>
        <begin position="151"/>
        <end position="159"/>
    </location>
</feature>
<feature type="transmembrane region" description="Helical" evidence="1">
    <location>
        <begin position="160"/>
        <end position="179"/>
    </location>
</feature>
<feature type="topological domain" description="Lumenal" evidence="1">
    <location>
        <begin position="180"/>
        <end position="202"/>
    </location>
</feature>
<feature type="transmembrane region" description="Helical" evidence="1">
    <location>
        <begin position="203"/>
        <end position="225"/>
    </location>
</feature>
<feature type="topological domain" description="Cytoplasmic" evidence="1">
    <location>
        <begin position="226"/>
        <end position="234"/>
    </location>
</feature>
<feature type="transmembrane region" description="Helical" evidence="1">
    <location>
        <begin position="235"/>
        <end position="257"/>
    </location>
</feature>
<feature type="topological domain" description="Lumenal" evidence="1">
    <location>
        <begin position="258"/>
        <end position="263"/>
    </location>
</feature>
<feature type="transmembrane region" description="Helical" evidence="1">
    <location>
        <begin position="264"/>
        <end position="289"/>
    </location>
</feature>
<feature type="topological domain" description="Cytoplasmic" evidence="1">
    <location>
        <begin position="290"/>
        <end position="298"/>
    </location>
</feature>
<feature type="transmembrane region" description="Helical" evidence="1">
    <location>
        <begin position="299"/>
        <end position="308"/>
    </location>
</feature>
<feature type="topological domain" description="Lumenal" evidence="1">
    <location>
        <begin position="309"/>
        <end position="331"/>
    </location>
</feature>
<feature type="transmembrane region" description="Helical" evidence="1">
    <location>
        <begin position="332"/>
        <end position="354"/>
    </location>
</feature>
<feature type="topological domain" description="Cytoplasmic" evidence="1">
    <location>
        <begin position="355"/>
        <end position="367"/>
    </location>
</feature>
<feature type="domain" description="PQ-loop 1">
    <location>
        <begin position="123"/>
        <end position="189"/>
    </location>
</feature>
<feature type="domain" description="PQ-loop 2">
    <location>
        <begin position="263"/>
        <end position="328"/>
    </location>
</feature>
<feature type="short sequence motif" description="Lysosomal targeting motif" evidence="3">
    <location>
        <begin position="362"/>
        <end position="366"/>
    </location>
</feature>
<feature type="binding site" evidence="1">
    <location>
        <position position="166"/>
    </location>
    <ligand>
        <name>L-cystine</name>
        <dbReference type="ChEBI" id="CHEBI:35491"/>
    </ligand>
</feature>
<feature type="binding site" evidence="1">
    <location>
        <position position="205"/>
    </location>
    <ligand>
        <name>H(+)</name>
        <dbReference type="ChEBI" id="CHEBI:15378"/>
    </ligand>
</feature>
<feature type="binding site" evidence="1">
    <location>
        <position position="273"/>
    </location>
    <ligand>
        <name>L-cystine</name>
        <dbReference type="ChEBI" id="CHEBI:35491"/>
    </ligand>
</feature>
<feature type="binding site" evidence="1">
    <location>
        <position position="280"/>
    </location>
    <ligand>
        <name>L-cystine</name>
        <dbReference type="ChEBI" id="CHEBI:35491"/>
    </ligand>
</feature>
<feature type="binding site" evidence="1">
    <location>
        <position position="281"/>
    </location>
    <ligand>
        <name>L-cystine</name>
        <dbReference type="ChEBI" id="CHEBI:35491"/>
    </ligand>
</feature>
<feature type="binding site" evidence="1">
    <location>
        <position position="301"/>
    </location>
    <ligand>
        <name>L-cystine</name>
        <dbReference type="ChEBI" id="CHEBI:35491"/>
    </ligand>
</feature>
<feature type="binding site" description="protonated residue following cystine-binding" evidence="1">
    <location>
        <position position="305"/>
    </location>
    <ligand>
        <name>H(+)</name>
        <dbReference type="ChEBI" id="CHEBI:15378"/>
    </ligand>
</feature>
<feature type="binding site" evidence="1">
    <location>
        <position position="305"/>
    </location>
    <ligand>
        <name>L-cystine</name>
        <dbReference type="ChEBI" id="CHEBI:35491"/>
    </ligand>
</feature>
<feature type="binding site" evidence="1">
    <location>
        <position position="346"/>
    </location>
    <ligand>
        <name>H(+)</name>
        <dbReference type="ChEBI" id="CHEBI:15378"/>
    </ligand>
</feature>
<feature type="glycosylation site" description="N-linked (GlcNAc...) asparagine" evidence="3">
    <location>
        <position position="51"/>
    </location>
</feature>
<feature type="glycosylation site" description="N-linked (GlcNAc...) asparagine" evidence="3">
    <location>
        <position position="66"/>
    </location>
</feature>
<feature type="glycosylation site" description="N-linked (GlcNAc...) asparagine" evidence="3">
    <location>
        <position position="84"/>
    </location>
</feature>
<feature type="glycosylation site" description="N-linked (GlcNAc...) asparagine" evidence="3">
    <location>
        <position position="104"/>
    </location>
</feature>
<feature type="glycosylation site" description="N-linked (GlcNAc...) asparagine" evidence="3">
    <location>
        <position position="107"/>
    </location>
</feature>
<keyword id="KW-0325">Glycoprotein</keyword>
<keyword id="KW-0458">Lysosome</keyword>
<keyword id="KW-0470">Melanin biosynthesis</keyword>
<keyword id="KW-0472">Membrane</keyword>
<keyword id="KW-0653">Protein transport</keyword>
<keyword id="KW-1185">Reference proteome</keyword>
<keyword id="KW-0677">Repeat</keyword>
<keyword id="KW-0732">Signal</keyword>
<keyword id="KW-0769">Symport</keyword>
<keyword id="KW-0812">Transmembrane</keyword>
<keyword id="KW-1133">Transmembrane helix</keyword>
<keyword id="KW-0813">Transport</keyword>
<dbReference type="EMBL" id="BC151357">
    <property type="protein sequence ID" value="AAI51358.1"/>
    <property type="molecule type" value="mRNA"/>
</dbReference>
<dbReference type="RefSeq" id="NP_001095734.1">
    <property type="nucleotide sequence ID" value="NM_001102264.1"/>
</dbReference>
<dbReference type="SMR" id="A7MB63"/>
<dbReference type="FunCoup" id="A7MB63">
    <property type="interactions" value="2032"/>
</dbReference>
<dbReference type="STRING" id="9913.ENSBTAP00000059515"/>
<dbReference type="GlyCosmos" id="A7MB63">
    <property type="glycosylation" value="5 sites, No reported glycans"/>
</dbReference>
<dbReference type="GlyGen" id="A7MB63">
    <property type="glycosylation" value="5 sites"/>
</dbReference>
<dbReference type="PaxDb" id="9913-ENSBTAP00000049590"/>
<dbReference type="Ensembl" id="ENSBTAT00000056260.4">
    <property type="protein sequence ID" value="ENSBTAP00000049590.2"/>
    <property type="gene ID" value="ENSBTAG00000000831.7"/>
</dbReference>
<dbReference type="GeneID" id="613527"/>
<dbReference type="KEGG" id="bta:613527"/>
<dbReference type="CTD" id="1497"/>
<dbReference type="VEuPathDB" id="HostDB:ENSBTAG00000000831"/>
<dbReference type="VGNC" id="VGNC:27807">
    <property type="gene designation" value="CTNS"/>
</dbReference>
<dbReference type="eggNOG" id="KOG3145">
    <property type="taxonomic scope" value="Eukaryota"/>
</dbReference>
<dbReference type="GeneTree" id="ENSGT00390000005338"/>
<dbReference type="HOGENOM" id="CLU_046327_1_0_1"/>
<dbReference type="InParanoid" id="A7MB63"/>
<dbReference type="OMA" id="WIDVIYT"/>
<dbReference type="OrthoDB" id="75720at2759"/>
<dbReference type="TreeFam" id="TF313589"/>
<dbReference type="Reactome" id="R-BTA-425393">
    <property type="pathway name" value="Transport of inorganic cations/anions and amino acids/oligopeptides"/>
</dbReference>
<dbReference type="Reactome" id="R-BTA-5223345">
    <property type="pathway name" value="Miscellaneous transport and binding events"/>
</dbReference>
<dbReference type="Proteomes" id="UP000009136">
    <property type="component" value="Chromosome 19"/>
</dbReference>
<dbReference type="Bgee" id="ENSBTAG00000000831">
    <property type="expression patterns" value="Expressed in mammary gland and 105 other cell types or tissues"/>
</dbReference>
<dbReference type="GO" id="GO:0005765">
    <property type="term" value="C:lysosomal membrane"/>
    <property type="evidence" value="ECO:0000250"/>
    <property type="project" value="UniProtKB"/>
</dbReference>
<dbReference type="GO" id="GO:0042470">
    <property type="term" value="C:melanosome"/>
    <property type="evidence" value="ECO:0000250"/>
    <property type="project" value="UniProtKB"/>
</dbReference>
<dbReference type="GO" id="GO:0033162">
    <property type="term" value="C:melanosome membrane"/>
    <property type="evidence" value="ECO:0007669"/>
    <property type="project" value="UniProtKB-SubCell"/>
</dbReference>
<dbReference type="GO" id="GO:0015184">
    <property type="term" value="F:L-cystine transmembrane transporter activity"/>
    <property type="evidence" value="ECO:0000250"/>
    <property type="project" value="UniProtKB"/>
</dbReference>
<dbReference type="GO" id="GO:0015295">
    <property type="term" value="F:solute:proton symporter activity"/>
    <property type="evidence" value="ECO:0000250"/>
    <property type="project" value="UniProtKB"/>
</dbReference>
<dbReference type="GO" id="GO:0015811">
    <property type="term" value="P:L-cystine transport"/>
    <property type="evidence" value="ECO:0000250"/>
    <property type="project" value="UniProtKB"/>
</dbReference>
<dbReference type="GO" id="GO:0042438">
    <property type="term" value="P:melanin biosynthetic process"/>
    <property type="evidence" value="ECO:0007669"/>
    <property type="project" value="UniProtKB-KW"/>
</dbReference>
<dbReference type="GO" id="GO:0015031">
    <property type="term" value="P:protein transport"/>
    <property type="evidence" value="ECO:0007669"/>
    <property type="project" value="UniProtKB-KW"/>
</dbReference>
<dbReference type="GO" id="GO:0048021">
    <property type="term" value="P:regulation of melanin biosynthetic process"/>
    <property type="evidence" value="ECO:0000250"/>
    <property type="project" value="UniProtKB"/>
</dbReference>
<dbReference type="FunFam" id="1.20.1280.290:FF:000016">
    <property type="entry name" value="Cystinosin homolog"/>
    <property type="match status" value="1"/>
</dbReference>
<dbReference type="FunFam" id="1.20.1280.290:FF:000015">
    <property type="entry name" value="cystinosin isoform X2"/>
    <property type="match status" value="1"/>
</dbReference>
<dbReference type="Gene3D" id="1.20.1280.290">
    <property type="match status" value="1"/>
</dbReference>
<dbReference type="InterPro" id="IPR005282">
    <property type="entry name" value="LC_transporter"/>
</dbReference>
<dbReference type="InterPro" id="IPR006603">
    <property type="entry name" value="PQ-loop_rpt"/>
</dbReference>
<dbReference type="NCBIfam" id="TIGR00951">
    <property type="entry name" value="2A43"/>
    <property type="match status" value="1"/>
</dbReference>
<dbReference type="PANTHER" id="PTHR13131">
    <property type="entry name" value="CYSTINOSIN"/>
    <property type="match status" value="1"/>
</dbReference>
<dbReference type="PANTHER" id="PTHR13131:SF5">
    <property type="entry name" value="CYSTINOSIN"/>
    <property type="match status" value="1"/>
</dbReference>
<dbReference type="Pfam" id="PF04193">
    <property type="entry name" value="PQ-loop"/>
    <property type="match status" value="2"/>
</dbReference>
<dbReference type="SMART" id="SM00679">
    <property type="entry name" value="CTNS"/>
    <property type="match status" value="2"/>
</dbReference>
<organism>
    <name type="scientific">Bos taurus</name>
    <name type="common">Bovine</name>
    <dbReference type="NCBI Taxonomy" id="9913"/>
    <lineage>
        <taxon>Eukaryota</taxon>
        <taxon>Metazoa</taxon>
        <taxon>Chordata</taxon>
        <taxon>Craniata</taxon>
        <taxon>Vertebrata</taxon>
        <taxon>Euteleostomi</taxon>
        <taxon>Mammalia</taxon>
        <taxon>Eutheria</taxon>
        <taxon>Laurasiatheria</taxon>
        <taxon>Artiodactyla</taxon>
        <taxon>Ruminantia</taxon>
        <taxon>Pecora</taxon>
        <taxon>Bovidae</taxon>
        <taxon>Bovinae</taxon>
        <taxon>Bos</taxon>
    </lineage>
</organism>
<evidence type="ECO:0000250" key="1">
    <source>
        <dbReference type="UniProtKB" id="O60931"/>
    </source>
</evidence>
<evidence type="ECO:0000250" key="2">
    <source>
        <dbReference type="UniProtKB" id="P57757"/>
    </source>
</evidence>
<evidence type="ECO:0000255" key="3"/>
<evidence type="ECO:0000305" key="4"/>
<protein>
    <recommendedName>
        <fullName evidence="4">Cystinosin</fullName>
    </recommendedName>
</protein>
<name>CTNS_BOVIN</name>
<gene>
    <name evidence="1" type="primary">CTNS</name>
</gene>
<comment type="function">
    <text evidence="2">Cystine/H(+) symporter that mediates export of cystine, the oxidized dimer of cysteine, from lysosomes. Plays an important role in melanin synthesis by catalyzing cystine export from melanosomes, possibly by inhibiting pheomelanin synthesis. In addition to cystine export, also acts as a positive regulator of mTORC1 signaling in kidney proximal tubular cells, via interactions with components of the v-ATPase and Ragulator complexes. Also involved in small GTPase-regulated vesicle trafficking and lysosomal localization of LAMP2A, independently of cystine transporter activity.</text>
</comment>
<comment type="catalytic activity">
    <reaction evidence="1">
        <text>L-cystine(out) + H(+)(out) = L-cystine(in) + H(+)(in)</text>
        <dbReference type="Rhea" id="RHEA:66172"/>
        <dbReference type="ChEBI" id="CHEBI:15378"/>
        <dbReference type="ChEBI" id="CHEBI:35491"/>
    </reaction>
    <physiologicalReaction direction="left-to-right" evidence="1">
        <dbReference type="Rhea" id="RHEA:66173"/>
    </physiologicalReaction>
</comment>
<comment type="activity regulation">
    <text evidence="1">Switches between a lumen- and a cytosol-open conformation: pH induces conformational changes and shifts the equilibrium to facilitate the transition between the lumen- and cytosol-open conformation, thereby promoting cystine transport. Protonation of specific aspartate residues (Asp-205, Asp-305 and Asp-346) favors the cytosol-open conformation.</text>
</comment>
<comment type="subunit">
    <text evidence="1 2">Interacts with components of the V-ATPase complex. Interacts with components of the Ragulator complex. Interacts with RRAGA/RagA and RRAGC/RagC (By similarity). Interacts with AP-3 complex subunit mu (AP3M1 or AP3M2) (By similarity).</text>
</comment>
<comment type="subcellular location">
    <subcellularLocation>
        <location evidence="2">Lysosome membrane</location>
        <topology evidence="3">Multi-pass membrane protein</topology>
    </subcellularLocation>
    <subcellularLocation>
        <location evidence="1">Melanosome membrane</location>
        <topology evidence="3">Multi-pass membrane protein</topology>
    </subcellularLocation>
    <text evidence="1">AP-3 complex is required for localization to the lysosome.</text>
</comment>
<comment type="domain">
    <text evidence="1">The lysosomal targeting motif, together with te second PQ-loop mediate targeting to the lysosome.</text>
</comment>
<comment type="similarity">
    <text evidence="4">Belongs to the cystinosin family.</text>
</comment>
<accession>A7MB63</accession>
<proteinExistence type="evidence at transcript level"/>
<sequence length="367" mass="41828">MIRRWLVIFILFPLQLIEKCESTVDFSVPPIVKLEKGSSTSVSISLPRPLNATLVITFEITFRSKNVTILQLPDEVVVPPGTTNSSFRVTSQSVGQVTTYLHGNHSNQTSPRIRFLVIHSNIVSIINQVIGWIYFVAWSVSFYPQVITNWRRKSVVGLSFDFVVLNLMGFVAYSVFNIGLFWVPSIKEQFLLKYPNGVNPVDSNDVFFSLHAVALTLVVIVQCLLYERGSQRVSWLAISFLVLSWLFTLIALIMAAVGATTWLQFLFCFSYIKLAVTLVKYFPQAYMNFHYKSTEGWSIGNVLLDFTGGSFSLLQMFLQSYNNDQWTLIFGDPTKFGLGIFSIIFDVVFFIQHFCLYRKKPGYDQLN</sequence>
<reference key="1">
    <citation type="submission" date="2007-07" db="EMBL/GenBank/DDBJ databases">
        <authorList>
            <consortium name="NIH - Mammalian Gene Collection (MGC) project"/>
        </authorList>
    </citation>
    <scope>NUCLEOTIDE SEQUENCE [LARGE SCALE MRNA]</scope>
    <source>
        <strain>Hereford</strain>
        <tissue>Fetal skin</tissue>
    </source>
</reference>